<feature type="chain" id="PRO_0000342132" description="Nucleoside triphosphatase NudI">
    <location>
        <begin position="1"/>
        <end position="141"/>
    </location>
</feature>
<feature type="domain" description="Nudix hydrolase" evidence="1">
    <location>
        <begin position="1"/>
        <end position="141"/>
    </location>
</feature>
<feature type="short sequence motif" description="Nudix box">
    <location>
        <begin position="38"/>
        <end position="59"/>
    </location>
</feature>
<protein>
    <recommendedName>
        <fullName evidence="1">Nucleoside triphosphatase NudI</fullName>
        <ecNumber evidence="1">3.6.1.9</ecNumber>
    </recommendedName>
    <alternativeName>
        <fullName evidence="1">Nucleotide diphosphatase NudI</fullName>
    </alternativeName>
    <alternativeName>
        <fullName evidence="1">Pyrimidine deoxynucleoside triphosphate diphosphatase</fullName>
    </alternativeName>
    <alternativeName>
        <fullName evidence="1">dCTP diphosphatase</fullName>
        <ecNumber evidence="1">3.6.1.12</ecNumber>
    </alternativeName>
    <alternativeName>
        <fullName evidence="1">dTTP diphosphatase</fullName>
        <ecNumber evidence="1">3.6.1.-</ecNumber>
    </alternativeName>
    <alternativeName>
        <fullName evidence="1">dUTP diphosphatase</fullName>
        <ecNumber evidence="1">3.6.1.23</ecNumber>
    </alternativeName>
</protein>
<dbReference type="EC" id="3.6.1.9" evidence="1"/>
<dbReference type="EC" id="3.6.1.12" evidence="1"/>
<dbReference type="EC" id="3.6.1.-" evidence="1"/>
<dbReference type="EC" id="3.6.1.23" evidence="1"/>
<dbReference type="EMBL" id="CP000247">
    <property type="protein sequence ID" value="ABG70288.1"/>
    <property type="molecule type" value="Genomic_DNA"/>
</dbReference>
<dbReference type="RefSeq" id="WP_001249883.1">
    <property type="nucleotide sequence ID" value="NC_008253.1"/>
</dbReference>
<dbReference type="SMR" id="Q0TFJ1"/>
<dbReference type="KEGG" id="ecp:ECP_2294"/>
<dbReference type="HOGENOM" id="CLU_037162_31_0_6"/>
<dbReference type="Proteomes" id="UP000009182">
    <property type="component" value="Chromosome"/>
</dbReference>
<dbReference type="GO" id="GO:0047840">
    <property type="term" value="F:dCTP diphosphatase activity"/>
    <property type="evidence" value="ECO:0007669"/>
    <property type="project" value="UniProtKB-EC"/>
</dbReference>
<dbReference type="GO" id="GO:0036218">
    <property type="term" value="F:dTTP diphosphatase activity"/>
    <property type="evidence" value="ECO:0007669"/>
    <property type="project" value="RHEA"/>
</dbReference>
<dbReference type="GO" id="GO:0004170">
    <property type="term" value="F:dUTP diphosphatase activity"/>
    <property type="evidence" value="ECO:0007669"/>
    <property type="project" value="UniProtKB-EC"/>
</dbReference>
<dbReference type="GO" id="GO:0000287">
    <property type="term" value="F:magnesium ion binding"/>
    <property type="evidence" value="ECO:0007669"/>
    <property type="project" value="UniProtKB-UniRule"/>
</dbReference>
<dbReference type="FunFam" id="3.90.79.10:FF:000039">
    <property type="entry name" value="Nucleoside triphosphatase NudI"/>
    <property type="match status" value="1"/>
</dbReference>
<dbReference type="Gene3D" id="3.90.79.10">
    <property type="entry name" value="Nucleoside Triphosphate Pyrophosphohydrolase"/>
    <property type="match status" value="1"/>
</dbReference>
<dbReference type="HAMAP" id="MF_01846">
    <property type="entry name" value="Nudix_NudI"/>
    <property type="match status" value="1"/>
</dbReference>
<dbReference type="InterPro" id="IPR023781">
    <property type="entry name" value="Nucleoside_triphosphatase_NudI"/>
</dbReference>
<dbReference type="InterPro" id="IPR020476">
    <property type="entry name" value="Nudix_hydrolase"/>
</dbReference>
<dbReference type="InterPro" id="IPR015797">
    <property type="entry name" value="NUDIX_hydrolase-like_dom_sf"/>
</dbReference>
<dbReference type="InterPro" id="IPR020084">
    <property type="entry name" value="NUDIX_hydrolase_CS"/>
</dbReference>
<dbReference type="InterPro" id="IPR000086">
    <property type="entry name" value="NUDIX_hydrolase_dom"/>
</dbReference>
<dbReference type="NCBIfam" id="NF012016">
    <property type="entry name" value="PRK15472.1"/>
    <property type="match status" value="1"/>
</dbReference>
<dbReference type="PANTHER" id="PTHR43046">
    <property type="entry name" value="GDP-MANNOSE MANNOSYL HYDROLASE"/>
    <property type="match status" value="1"/>
</dbReference>
<dbReference type="PANTHER" id="PTHR43046:SF14">
    <property type="entry name" value="MUTT_NUDIX FAMILY PROTEIN"/>
    <property type="match status" value="1"/>
</dbReference>
<dbReference type="Pfam" id="PF00293">
    <property type="entry name" value="NUDIX"/>
    <property type="match status" value="1"/>
</dbReference>
<dbReference type="PRINTS" id="PR00502">
    <property type="entry name" value="NUDIXFAMILY"/>
</dbReference>
<dbReference type="SUPFAM" id="SSF55811">
    <property type="entry name" value="Nudix"/>
    <property type="match status" value="1"/>
</dbReference>
<dbReference type="PROSITE" id="PS51462">
    <property type="entry name" value="NUDIX"/>
    <property type="match status" value="1"/>
</dbReference>
<dbReference type="PROSITE" id="PS00893">
    <property type="entry name" value="NUDIX_BOX"/>
    <property type="match status" value="1"/>
</dbReference>
<evidence type="ECO:0000255" key="1">
    <source>
        <dbReference type="HAMAP-Rule" id="MF_01846"/>
    </source>
</evidence>
<keyword id="KW-0378">Hydrolase</keyword>
<keyword id="KW-0460">Magnesium</keyword>
<comment type="function">
    <text evidence="1">Catalyzes the hydrolysis of nucleoside triphosphates, with a preference for pyrimidine deoxynucleoside triphosphates (dUTP, dTTP and dCTP).</text>
</comment>
<comment type="catalytic activity">
    <reaction evidence="1">
        <text>a ribonucleoside 5'-triphosphate + H2O = a ribonucleoside 5'-phosphate + diphosphate + H(+)</text>
        <dbReference type="Rhea" id="RHEA:23996"/>
        <dbReference type="ChEBI" id="CHEBI:15377"/>
        <dbReference type="ChEBI" id="CHEBI:15378"/>
        <dbReference type="ChEBI" id="CHEBI:33019"/>
        <dbReference type="ChEBI" id="CHEBI:58043"/>
        <dbReference type="ChEBI" id="CHEBI:61557"/>
        <dbReference type="EC" id="3.6.1.9"/>
    </reaction>
</comment>
<comment type="catalytic activity">
    <reaction evidence="1">
        <text>a 2'-deoxyribonucleoside 5'-triphosphate + H2O = a 2'-deoxyribonucleoside 5'-phosphate + diphosphate + H(+)</text>
        <dbReference type="Rhea" id="RHEA:44644"/>
        <dbReference type="ChEBI" id="CHEBI:15377"/>
        <dbReference type="ChEBI" id="CHEBI:15378"/>
        <dbReference type="ChEBI" id="CHEBI:33019"/>
        <dbReference type="ChEBI" id="CHEBI:61560"/>
        <dbReference type="ChEBI" id="CHEBI:65317"/>
        <dbReference type="EC" id="3.6.1.9"/>
    </reaction>
</comment>
<comment type="catalytic activity">
    <reaction evidence="1">
        <text>dUTP + H2O = dUMP + diphosphate + H(+)</text>
        <dbReference type="Rhea" id="RHEA:10248"/>
        <dbReference type="ChEBI" id="CHEBI:15377"/>
        <dbReference type="ChEBI" id="CHEBI:15378"/>
        <dbReference type="ChEBI" id="CHEBI:33019"/>
        <dbReference type="ChEBI" id="CHEBI:61555"/>
        <dbReference type="ChEBI" id="CHEBI:246422"/>
        <dbReference type="EC" id="3.6.1.9"/>
    </reaction>
</comment>
<comment type="catalytic activity">
    <reaction evidence="1">
        <text>dUTP + H2O = dUMP + diphosphate + H(+)</text>
        <dbReference type="Rhea" id="RHEA:10248"/>
        <dbReference type="ChEBI" id="CHEBI:15377"/>
        <dbReference type="ChEBI" id="CHEBI:15378"/>
        <dbReference type="ChEBI" id="CHEBI:33019"/>
        <dbReference type="ChEBI" id="CHEBI:61555"/>
        <dbReference type="ChEBI" id="CHEBI:246422"/>
        <dbReference type="EC" id="3.6.1.23"/>
    </reaction>
</comment>
<comment type="catalytic activity">
    <reaction evidence="1">
        <text>dTTP + H2O = dTMP + diphosphate + H(+)</text>
        <dbReference type="Rhea" id="RHEA:28534"/>
        <dbReference type="ChEBI" id="CHEBI:15377"/>
        <dbReference type="ChEBI" id="CHEBI:15378"/>
        <dbReference type="ChEBI" id="CHEBI:33019"/>
        <dbReference type="ChEBI" id="CHEBI:37568"/>
        <dbReference type="ChEBI" id="CHEBI:63528"/>
        <dbReference type="EC" id="3.6.1.9"/>
    </reaction>
</comment>
<comment type="catalytic activity">
    <reaction evidence="1">
        <text>dCTP + H2O = dCMP + diphosphate + H(+)</text>
        <dbReference type="Rhea" id="RHEA:22636"/>
        <dbReference type="ChEBI" id="CHEBI:15377"/>
        <dbReference type="ChEBI" id="CHEBI:15378"/>
        <dbReference type="ChEBI" id="CHEBI:33019"/>
        <dbReference type="ChEBI" id="CHEBI:57566"/>
        <dbReference type="ChEBI" id="CHEBI:61481"/>
        <dbReference type="EC" id="3.6.1.9"/>
    </reaction>
</comment>
<comment type="catalytic activity">
    <reaction evidence="1">
        <text>dCTP + H2O = dCMP + diphosphate + H(+)</text>
        <dbReference type="Rhea" id="RHEA:22636"/>
        <dbReference type="ChEBI" id="CHEBI:15377"/>
        <dbReference type="ChEBI" id="CHEBI:15378"/>
        <dbReference type="ChEBI" id="CHEBI:33019"/>
        <dbReference type="ChEBI" id="CHEBI:57566"/>
        <dbReference type="ChEBI" id="CHEBI:61481"/>
        <dbReference type="EC" id="3.6.1.12"/>
    </reaction>
</comment>
<comment type="cofactor">
    <cofactor evidence="1">
        <name>Mg(2+)</name>
        <dbReference type="ChEBI" id="CHEBI:18420"/>
    </cofactor>
</comment>
<comment type="subunit">
    <text evidence="1">Monomer.</text>
</comment>
<comment type="similarity">
    <text evidence="1">Belongs to the Nudix hydrolase family. NudI subfamily.</text>
</comment>
<sequence>MRQRTIVCPLIQNDGAYLLCKMADDRGVFPGQWALSGGGVEPGERIEEALRREIREELGEQLLLTEITPWTFSDDIRTKTYADGRKEEIYMIYLIFDCVSANRDVKINEEFQDYAWVKPEDLVHYDLNVATRKTLRLKGLL</sequence>
<reference key="1">
    <citation type="journal article" date="2006" name="Mol. Microbiol.">
        <title>Role of pathogenicity island-associated integrases in the genome plasticity of uropathogenic Escherichia coli strain 536.</title>
        <authorList>
            <person name="Hochhut B."/>
            <person name="Wilde C."/>
            <person name="Balling G."/>
            <person name="Middendorf B."/>
            <person name="Dobrindt U."/>
            <person name="Brzuszkiewicz E."/>
            <person name="Gottschalk G."/>
            <person name="Carniel E."/>
            <person name="Hacker J."/>
        </authorList>
    </citation>
    <scope>NUCLEOTIDE SEQUENCE [LARGE SCALE GENOMIC DNA]</scope>
    <source>
        <strain>536 / UPEC</strain>
    </source>
</reference>
<gene>
    <name evidence="1" type="primary">nudI</name>
    <name type="ordered locus">ECP_2294</name>
</gene>
<organism>
    <name type="scientific">Escherichia coli O6:K15:H31 (strain 536 / UPEC)</name>
    <dbReference type="NCBI Taxonomy" id="362663"/>
    <lineage>
        <taxon>Bacteria</taxon>
        <taxon>Pseudomonadati</taxon>
        <taxon>Pseudomonadota</taxon>
        <taxon>Gammaproteobacteria</taxon>
        <taxon>Enterobacterales</taxon>
        <taxon>Enterobacteriaceae</taxon>
        <taxon>Escherichia</taxon>
    </lineage>
</organism>
<proteinExistence type="inferred from homology"/>
<name>NUDI_ECOL5</name>
<accession>Q0TFJ1</accession>